<protein>
    <recommendedName>
        <fullName>Regulator of G-protein signaling 7-binding protein</fullName>
    </recommendedName>
    <alternativeName>
        <fullName>R7 family-binding protein</fullName>
    </alternativeName>
</protein>
<comment type="function">
    <text evidence="2">Regulator of G protein-coupled receptor (GPCR) signaling. Regulatory subunit of the R7-Gbeta5 complexes that acts by controlling the subcellular location of the R7-Gbeta5 complexes. When palmitoylated, it targets the R7-Gbeta5 complexes to the plasma membrane, leading to inhibit G protein alpha subunits. When it is unpalmitoylated, the R7-Gbeta5 complexes undergo a nuclear/cytoplasmic shuttling. May also act by controlling the proteolytic stability of R7 proteins, probably by protecting them from degradation.</text>
</comment>
<comment type="subunit">
    <text evidence="2">Interacts with 'R7' family proteins RGS6, RGS7, RGS9 and RGS11. Component of some R7-Gbeta5 complex composed of some R7 protein (RGS6, RGS7, RGS9 or RGS11), Gbeta5 (GNB5) and RGS7BP.</text>
</comment>
<comment type="subcellular location">
    <subcellularLocation>
        <location evidence="4">Nucleus</location>
    </subcellularLocation>
    <subcellularLocation>
        <location evidence="2">Cytoplasm</location>
    </subcellularLocation>
    <subcellularLocation>
        <location evidence="4">Cell membrane</location>
        <topology evidence="2">Lipid-anchor</topology>
    </subcellularLocation>
    <text evidence="4">Shuttling between the plasma membrane, the cytoplasm and the nucleus is regulated by palmitoylation.</text>
</comment>
<comment type="domain">
    <text evidence="2">The nuclear localization signal is both required for nuclear localization and palmitoylation.</text>
</comment>
<comment type="PTM">
    <text evidence="2 4">Palmitoylated (PubMed:21343290). Undergoes rapid palmitoylation turnover (PubMed:21343290). De novo and turnover palmitoylation are both mediated by ZDHHC2 (PubMed:21343290). Palmitoylation regulates the cell membrane and nuclear shuttling and the regulation of GPCR signaling (By similarity). Upon depalmitoylation, it is targeted from the plasma membrane into the nucleus (By similarity). GPCR signaling inhibits depalmitoylation and promotes localization to the plasma membrane (PubMed:21343290).</text>
</comment>
<comment type="similarity">
    <text evidence="5">Belongs to the RGS7BP/RGS9BP family.</text>
</comment>
<sequence>MSSAPNGRKKRPSRSTRSSIFQISKPPLQSGDWERRGSGSESAHKTQRALDDCKMLVQEFNTQVALYRELVISIGDVSVSCPSLRAEMHKTRTKGCEMARQAHQKLAAISGPEDGEIHPEICRLYIQLQCCLEMYTTEMLKSICLLGSLQFHRKGKEASGGAKSLDSKIEENAETPALEDSLSSPLDSQQQSWQVATDIENTERDMREMKNLLSKLRETMPLPLKNQDDSSLLNLTPYPMVRRRKRRFFGLCCLVSS</sequence>
<accession>Q5FVH8</accession>
<gene>
    <name type="primary">Rgs7bp</name>
    <name type="synonym">R7bp</name>
</gene>
<keyword id="KW-1003">Cell membrane</keyword>
<keyword id="KW-0963">Cytoplasm</keyword>
<keyword id="KW-0449">Lipoprotein</keyword>
<keyword id="KW-0472">Membrane</keyword>
<keyword id="KW-0539">Nucleus</keyword>
<keyword id="KW-0564">Palmitate</keyword>
<keyword id="KW-1185">Reference proteome</keyword>
<keyword id="KW-0734">Signal transduction inhibitor</keyword>
<proteinExistence type="evidence at protein level"/>
<feature type="chain" id="PRO_0000287597" description="Regulator of G-protein signaling 7-binding protein">
    <location>
        <begin position="1"/>
        <end position="257"/>
    </location>
</feature>
<feature type="region of interest" description="Disordered" evidence="3">
    <location>
        <begin position="1"/>
        <end position="45"/>
    </location>
</feature>
<feature type="region of interest" description="Disordered" evidence="3">
    <location>
        <begin position="172"/>
        <end position="191"/>
    </location>
</feature>
<feature type="short sequence motif" description="Nuclear localization signal" evidence="1">
    <location>
        <begin position="242"/>
        <end position="247"/>
    </location>
</feature>
<feature type="compositionally biased region" description="Basic and acidic residues" evidence="3">
    <location>
        <begin position="32"/>
        <end position="45"/>
    </location>
</feature>
<feature type="compositionally biased region" description="Low complexity" evidence="3">
    <location>
        <begin position="180"/>
        <end position="191"/>
    </location>
</feature>
<feature type="lipid moiety-binding region" description="S-palmitoyl cysteine" evidence="1">
    <location>
        <position position="252"/>
    </location>
</feature>
<feature type="lipid moiety-binding region" description="S-palmitoyl cysteine" evidence="1">
    <location>
        <position position="253"/>
    </location>
</feature>
<reference key="1">
    <citation type="journal article" date="2004" name="Genome Res.">
        <title>The status, quality, and expansion of the NIH full-length cDNA project: the Mammalian Gene Collection (MGC).</title>
        <authorList>
            <consortium name="The MGC Project Team"/>
        </authorList>
    </citation>
    <scope>NUCLEOTIDE SEQUENCE [LARGE SCALE MRNA]</scope>
    <source>
        <tissue>Brain</tissue>
    </source>
</reference>
<reference key="2">
    <citation type="journal article" date="2011" name="J. Biol. Chem.">
        <title>Gi/o signaling and the palmitoyltransferase DHHC2 regulate palmitate cycling and shuttling of RGS7 family-binding protein.</title>
        <authorList>
            <person name="Jia L."/>
            <person name="Linder M.E."/>
            <person name="Blumer K.J."/>
        </authorList>
    </citation>
    <scope>SUBCELLULAR LOCATION</scope>
    <scope>PALMITOYLATION</scope>
</reference>
<organism>
    <name type="scientific">Rattus norvegicus</name>
    <name type="common">Rat</name>
    <dbReference type="NCBI Taxonomy" id="10116"/>
    <lineage>
        <taxon>Eukaryota</taxon>
        <taxon>Metazoa</taxon>
        <taxon>Chordata</taxon>
        <taxon>Craniata</taxon>
        <taxon>Vertebrata</taxon>
        <taxon>Euteleostomi</taxon>
        <taxon>Mammalia</taxon>
        <taxon>Eutheria</taxon>
        <taxon>Euarchontoglires</taxon>
        <taxon>Glires</taxon>
        <taxon>Rodentia</taxon>
        <taxon>Myomorpha</taxon>
        <taxon>Muroidea</taxon>
        <taxon>Muridae</taxon>
        <taxon>Murinae</taxon>
        <taxon>Rattus</taxon>
    </lineage>
</organism>
<name>R7BP_RAT</name>
<dbReference type="EMBL" id="BC089977">
    <property type="protein sequence ID" value="AAH89977.1"/>
    <property type="molecule type" value="mRNA"/>
</dbReference>
<dbReference type="RefSeq" id="NP_001012347.1">
    <property type="nucleotide sequence ID" value="NM_001012347.1"/>
</dbReference>
<dbReference type="SMR" id="Q5FVH8"/>
<dbReference type="FunCoup" id="Q5FVH8">
    <property type="interactions" value="947"/>
</dbReference>
<dbReference type="STRING" id="10116.ENSRNOP00000018058"/>
<dbReference type="PhosphoSitePlus" id="Q5FVH8"/>
<dbReference type="SwissPalm" id="Q5FVH8"/>
<dbReference type="PaxDb" id="10116-ENSRNOP00000018058"/>
<dbReference type="Ensembl" id="ENSRNOT00000018058.8">
    <property type="protein sequence ID" value="ENSRNOP00000018058.7"/>
    <property type="gene ID" value="ENSRNOG00000013389.8"/>
</dbReference>
<dbReference type="GeneID" id="294715"/>
<dbReference type="KEGG" id="rno:294715"/>
<dbReference type="UCSC" id="RGD:1309360">
    <property type="organism name" value="rat"/>
</dbReference>
<dbReference type="AGR" id="RGD:1309360"/>
<dbReference type="CTD" id="401190"/>
<dbReference type="RGD" id="1309360">
    <property type="gene designation" value="Rgs7bp"/>
</dbReference>
<dbReference type="eggNOG" id="ENOG502QPUF">
    <property type="taxonomic scope" value="Eukaryota"/>
</dbReference>
<dbReference type="GeneTree" id="ENSGT00940000153725"/>
<dbReference type="HOGENOM" id="CLU_112711_0_0_1"/>
<dbReference type="InParanoid" id="Q5FVH8"/>
<dbReference type="OMA" id="KDMRDMK"/>
<dbReference type="OrthoDB" id="9876293at2759"/>
<dbReference type="PhylomeDB" id="Q5FVH8"/>
<dbReference type="TreeFam" id="TF330985"/>
<dbReference type="PRO" id="PR:Q5FVH8"/>
<dbReference type="Proteomes" id="UP000002494">
    <property type="component" value="Chromosome 2"/>
</dbReference>
<dbReference type="GO" id="GO:0030424">
    <property type="term" value="C:axon"/>
    <property type="evidence" value="ECO:0000314"/>
    <property type="project" value="RGD"/>
</dbReference>
<dbReference type="GO" id="GO:0005737">
    <property type="term" value="C:cytoplasm"/>
    <property type="evidence" value="ECO:0000266"/>
    <property type="project" value="RGD"/>
</dbReference>
<dbReference type="GO" id="GO:0043198">
    <property type="term" value="C:dendritic shaft"/>
    <property type="evidence" value="ECO:0000314"/>
    <property type="project" value="RGD"/>
</dbReference>
<dbReference type="GO" id="GO:0044327">
    <property type="term" value="C:dendritic spine head"/>
    <property type="evidence" value="ECO:0000314"/>
    <property type="project" value="RGD"/>
</dbReference>
<dbReference type="GO" id="GO:0098978">
    <property type="term" value="C:glutamatergic synapse"/>
    <property type="evidence" value="ECO:0000266"/>
    <property type="project" value="RGD"/>
</dbReference>
<dbReference type="GO" id="GO:0043005">
    <property type="term" value="C:neuron projection"/>
    <property type="evidence" value="ECO:0000318"/>
    <property type="project" value="GO_Central"/>
</dbReference>
<dbReference type="GO" id="GO:0005634">
    <property type="term" value="C:nucleus"/>
    <property type="evidence" value="ECO:0000266"/>
    <property type="project" value="RGD"/>
</dbReference>
<dbReference type="GO" id="GO:0043204">
    <property type="term" value="C:perikaryon"/>
    <property type="evidence" value="ECO:0000314"/>
    <property type="project" value="RGD"/>
</dbReference>
<dbReference type="GO" id="GO:0005886">
    <property type="term" value="C:plasma membrane"/>
    <property type="evidence" value="ECO:0000266"/>
    <property type="project" value="RGD"/>
</dbReference>
<dbReference type="GO" id="GO:0098794">
    <property type="term" value="C:postsynapse"/>
    <property type="evidence" value="ECO:0000266"/>
    <property type="project" value="RGD"/>
</dbReference>
<dbReference type="GO" id="GO:0098839">
    <property type="term" value="C:postsynaptic density membrane"/>
    <property type="evidence" value="ECO:0000266"/>
    <property type="project" value="RGD"/>
</dbReference>
<dbReference type="GO" id="GO:0098793">
    <property type="term" value="C:presynapse"/>
    <property type="evidence" value="ECO:0000266"/>
    <property type="project" value="RGD"/>
</dbReference>
<dbReference type="GO" id="GO:0042734">
    <property type="term" value="C:presynaptic membrane"/>
    <property type="evidence" value="ECO:0000266"/>
    <property type="project" value="RGD"/>
</dbReference>
<dbReference type="GO" id="GO:0007186">
    <property type="term" value="P:G protein-coupled receptor signaling pathway"/>
    <property type="evidence" value="ECO:0000266"/>
    <property type="project" value="RGD"/>
</dbReference>
<dbReference type="GO" id="GO:0009968">
    <property type="term" value="P:negative regulation of signal transduction"/>
    <property type="evidence" value="ECO:0007669"/>
    <property type="project" value="UniProtKB-KW"/>
</dbReference>
<dbReference type="GO" id="GO:0060078">
    <property type="term" value="P:regulation of postsynaptic membrane potential"/>
    <property type="evidence" value="ECO:0000266"/>
    <property type="project" value="RGD"/>
</dbReference>
<dbReference type="InterPro" id="IPR026512">
    <property type="entry name" value="RGS7BP/RGS9BP"/>
</dbReference>
<dbReference type="PANTHER" id="PTHR21029">
    <property type="entry name" value="R-SEVEN BINDING PROTEIN (R7BP) HOMOLOG"/>
    <property type="match status" value="1"/>
</dbReference>
<evidence type="ECO:0000250" key="1"/>
<evidence type="ECO:0000250" key="2">
    <source>
        <dbReference type="UniProtKB" id="Q8BQP9"/>
    </source>
</evidence>
<evidence type="ECO:0000256" key="3">
    <source>
        <dbReference type="SAM" id="MobiDB-lite"/>
    </source>
</evidence>
<evidence type="ECO:0000269" key="4">
    <source>
    </source>
</evidence>
<evidence type="ECO:0000305" key="5"/>